<evidence type="ECO:0000250" key="1">
    <source>
        <dbReference type="UniProtKB" id="Q9S7P8"/>
    </source>
</evidence>
<evidence type="ECO:0000256" key="2">
    <source>
        <dbReference type="SAM" id="MobiDB-lite"/>
    </source>
</evidence>
<evidence type="ECO:0000269" key="3">
    <source>
    </source>
</evidence>
<evidence type="ECO:0000305" key="4"/>
<reference key="1">
    <citation type="journal article" date="2000" name="Nature">
        <title>Sequence and analysis of chromosome 1 of the plant Arabidopsis thaliana.</title>
        <authorList>
            <person name="Theologis A."/>
            <person name="Ecker J.R."/>
            <person name="Palm C.J."/>
            <person name="Federspiel N.A."/>
            <person name="Kaul S."/>
            <person name="White O."/>
            <person name="Alonso J."/>
            <person name="Altafi H."/>
            <person name="Araujo R."/>
            <person name="Bowman C.L."/>
            <person name="Brooks S.Y."/>
            <person name="Buehler E."/>
            <person name="Chan A."/>
            <person name="Chao Q."/>
            <person name="Chen H."/>
            <person name="Cheuk R.F."/>
            <person name="Chin C.W."/>
            <person name="Chung M.K."/>
            <person name="Conn L."/>
            <person name="Conway A.B."/>
            <person name="Conway A.R."/>
            <person name="Creasy T.H."/>
            <person name="Dewar K."/>
            <person name="Dunn P."/>
            <person name="Etgu P."/>
            <person name="Feldblyum T.V."/>
            <person name="Feng J.-D."/>
            <person name="Fong B."/>
            <person name="Fujii C.Y."/>
            <person name="Gill J.E."/>
            <person name="Goldsmith A.D."/>
            <person name="Haas B."/>
            <person name="Hansen N.F."/>
            <person name="Hughes B."/>
            <person name="Huizar L."/>
            <person name="Hunter J.L."/>
            <person name="Jenkins J."/>
            <person name="Johnson-Hopson C."/>
            <person name="Khan S."/>
            <person name="Khaykin E."/>
            <person name="Kim C.J."/>
            <person name="Koo H.L."/>
            <person name="Kremenetskaia I."/>
            <person name="Kurtz D.B."/>
            <person name="Kwan A."/>
            <person name="Lam B."/>
            <person name="Langin-Hooper S."/>
            <person name="Lee A."/>
            <person name="Lee J.M."/>
            <person name="Lenz C.A."/>
            <person name="Li J.H."/>
            <person name="Li Y.-P."/>
            <person name="Lin X."/>
            <person name="Liu S.X."/>
            <person name="Liu Z.A."/>
            <person name="Luros J.S."/>
            <person name="Maiti R."/>
            <person name="Marziali A."/>
            <person name="Militscher J."/>
            <person name="Miranda M."/>
            <person name="Nguyen M."/>
            <person name="Nierman W.C."/>
            <person name="Osborne B.I."/>
            <person name="Pai G."/>
            <person name="Peterson J."/>
            <person name="Pham P.K."/>
            <person name="Rizzo M."/>
            <person name="Rooney T."/>
            <person name="Rowley D."/>
            <person name="Sakano H."/>
            <person name="Salzberg S.L."/>
            <person name="Schwartz J.R."/>
            <person name="Shinn P."/>
            <person name="Southwick A.M."/>
            <person name="Sun H."/>
            <person name="Tallon L.J."/>
            <person name="Tambunga G."/>
            <person name="Toriumi M.J."/>
            <person name="Town C.D."/>
            <person name="Utterback T."/>
            <person name="Van Aken S."/>
            <person name="Vaysberg M."/>
            <person name="Vysotskaia V.S."/>
            <person name="Walker M."/>
            <person name="Wu D."/>
            <person name="Yu G."/>
            <person name="Fraser C.M."/>
            <person name="Venter J.C."/>
            <person name="Davis R.W."/>
        </authorList>
    </citation>
    <scope>NUCLEOTIDE SEQUENCE [LARGE SCALE GENOMIC DNA]</scope>
    <source>
        <strain>cv. Columbia</strain>
    </source>
</reference>
<reference key="2">
    <citation type="journal article" date="2017" name="Plant J.">
        <title>Araport11: a complete reannotation of the Arabidopsis thaliana reference genome.</title>
        <authorList>
            <person name="Cheng C.Y."/>
            <person name="Krishnakumar V."/>
            <person name="Chan A.P."/>
            <person name="Thibaud-Nissen F."/>
            <person name="Schobel S."/>
            <person name="Town C.D."/>
        </authorList>
    </citation>
    <scope>GENOME REANNOTATION</scope>
    <source>
        <strain>cv. Columbia</strain>
    </source>
</reference>
<reference key="3">
    <citation type="submission" date="2006-02" db="EMBL/GenBank/DDBJ databases">
        <title>Arabidopsis ORF clones.</title>
        <authorList>
            <person name="Shinn P."/>
            <person name="Chen H."/>
            <person name="Kim C.J."/>
            <person name="Ecker J.R."/>
        </authorList>
    </citation>
    <scope>NUCLEOTIDE SEQUENCE [LARGE SCALE MRNA]</scope>
    <source>
        <strain>cv. Columbia</strain>
    </source>
</reference>
<reference key="4">
    <citation type="submission" date="2002-03" db="EMBL/GenBank/DDBJ databases">
        <title>Full-length cDNA from Arabidopsis thaliana.</title>
        <authorList>
            <person name="Brover V.V."/>
            <person name="Troukhan M.E."/>
            <person name="Alexandrov N.A."/>
            <person name="Lu Y.-P."/>
            <person name="Flavell R.B."/>
            <person name="Feldmann K.A."/>
        </authorList>
    </citation>
    <scope>NUCLEOTIDE SEQUENCE [LARGE SCALE MRNA]</scope>
</reference>
<reference key="5">
    <citation type="book" date="2002" name="Proceedings of the 13th international conference on Arabidopsis research">
        <title>Functional analysis of SPIRAL1-LIKE genes.</title>
        <authorList>
            <person name="Nakajima K."/>
            <person name="Kawamura T."/>
            <person name="Furutani I."/>
            <person name="Hashimoto T."/>
        </authorList>
    </citation>
    <scope>GENE FAMILY</scope>
</reference>
<reference key="6">
    <citation type="journal article" date="2006" name="Plant Cell Physiol.">
        <title>Role of the SPIRAL1 gene family in anisotropic growth of Arabidopsis thaliana.</title>
        <authorList>
            <person name="Nakajima K."/>
            <person name="Kawamura T."/>
            <person name="Hashimoto T."/>
        </authorList>
    </citation>
    <scope>FUNCTION</scope>
    <scope>TISSUE SPECIFICITY</scope>
    <scope>GENE FAMILY</scope>
</reference>
<dbReference type="EMBL" id="AC008262">
    <property type="protein sequence ID" value="AAF27065.1"/>
    <property type="molecule type" value="Genomic_DNA"/>
</dbReference>
<dbReference type="EMBL" id="AC018364">
    <property type="protein sequence ID" value="AAG52493.1"/>
    <property type="molecule type" value="Genomic_DNA"/>
</dbReference>
<dbReference type="EMBL" id="CP002684">
    <property type="protein sequence ID" value="AEE34898.1"/>
    <property type="molecule type" value="Genomic_DNA"/>
</dbReference>
<dbReference type="EMBL" id="CP002684">
    <property type="protein sequence ID" value="AEE34899.1"/>
    <property type="molecule type" value="Genomic_DNA"/>
</dbReference>
<dbReference type="EMBL" id="BT024676">
    <property type="protein sequence ID" value="ABD57501.1"/>
    <property type="molecule type" value="mRNA"/>
</dbReference>
<dbReference type="EMBL" id="AY087016">
    <property type="protein sequence ID" value="AAM64577.1"/>
    <property type="molecule type" value="mRNA"/>
</dbReference>
<dbReference type="PIR" id="C96716">
    <property type="entry name" value="C96716"/>
</dbReference>
<dbReference type="RefSeq" id="NP_177083.1">
    <property type="nucleotide sequence ID" value="NM_105590.3"/>
</dbReference>
<dbReference type="RefSeq" id="NP_974110.1">
    <property type="nucleotide sequence ID" value="NM_202381.2"/>
</dbReference>
<dbReference type="FunCoup" id="Q9LE54">
    <property type="interactions" value="21"/>
</dbReference>
<dbReference type="STRING" id="3702.Q9LE54"/>
<dbReference type="iPTMnet" id="Q9LE54"/>
<dbReference type="PaxDb" id="3702-AT1G69230.2"/>
<dbReference type="ProteomicsDB" id="232519"/>
<dbReference type="EnsemblPlants" id="AT1G69230.1">
    <property type="protein sequence ID" value="AT1G69230.1"/>
    <property type="gene ID" value="AT1G69230"/>
</dbReference>
<dbReference type="EnsemblPlants" id="AT1G69230.2">
    <property type="protein sequence ID" value="AT1G69230.2"/>
    <property type="gene ID" value="AT1G69230"/>
</dbReference>
<dbReference type="GeneID" id="843254"/>
<dbReference type="Gramene" id="AT1G69230.1">
    <property type="protein sequence ID" value="AT1G69230.1"/>
    <property type="gene ID" value="AT1G69230"/>
</dbReference>
<dbReference type="Gramene" id="AT1G69230.2">
    <property type="protein sequence ID" value="AT1G69230.2"/>
    <property type="gene ID" value="AT1G69230"/>
</dbReference>
<dbReference type="KEGG" id="ath:AT1G69230"/>
<dbReference type="Araport" id="AT1G69230"/>
<dbReference type="TAIR" id="AT1G69230">
    <property type="gene designation" value="SP1L2"/>
</dbReference>
<dbReference type="eggNOG" id="ENOG502S4KK">
    <property type="taxonomic scope" value="Eukaryota"/>
</dbReference>
<dbReference type="HOGENOM" id="CLU_129558_0_0_1"/>
<dbReference type="InParanoid" id="Q9LE54"/>
<dbReference type="OMA" id="ARKFYKM"/>
<dbReference type="PhylomeDB" id="Q9LE54"/>
<dbReference type="PRO" id="PR:Q9LE54"/>
<dbReference type="Proteomes" id="UP000006548">
    <property type="component" value="Chromosome 1"/>
</dbReference>
<dbReference type="ExpressionAtlas" id="Q9LE54">
    <property type="expression patterns" value="baseline and differential"/>
</dbReference>
<dbReference type="GO" id="GO:0005829">
    <property type="term" value="C:cytosol"/>
    <property type="evidence" value="ECO:0007005"/>
    <property type="project" value="TAIR"/>
</dbReference>
<dbReference type="GO" id="GO:0005874">
    <property type="term" value="C:microtubule"/>
    <property type="evidence" value="ECO:0007669"/>
    <property type="project" value="UniProtKB-KW"/>
</dbReference>
<dbReference type="GO" id="GO:0043622">
    <property type="term" value="P:cortical microtubule organization"/>
    <property type="evidence" value="ECO:0007669"/>
    <property type="project" value="InterPro"/>
</dbReference>
<dbReference type="InterPro" id="IPR039613">
    <property type="entry name" value="SPR1/2/3/4/5"/>
</dbReference>
<dbReference type="PANTHER" id="PTHR33403:SF47">
    <property type="entry name" value="PROTEIN SPIRAL1-LIKE 2"/>
    <property type="match status" value="1"/>
</dbReference>
<dbReference type="PANTHER" id="PTHR33403">
    <property type="entry name" value="SPR1"/>
    <property type="match status" value="1"/>
</dbReference>
<gene>
    <name type="primary">SP1L2</name>
    <name type="ordered locus">At1g69230</name>
    <name type="ORF">F23O10.19</name>
    <name type="ORF">F4N2.18</name>
</gene>
<name>SP1L2_ARATH</name>
<feature type="chain" id="PRO_0000417954" description="Protein SPIRAL1-like 2">
    <location>
        <begin position="1"/>
        <end position="110"/>
    </location>
</feature>
<feature type="region of interest" description="Disordered" evidence="2">
    <location>
        <begin position="28"/>
        <end position="110"/>
    </location>
</feature>
<feature type="compositionally biased region" description="Low complexity" evidence="2">
    <location>
        <begin position="40"/>
        <end position="52"/>
    </location>
</feature>
<feature type="compositionally biased region" description="Polar residues" evidence="2">
    <location>
        <begin position="63"/>
        <end position="82"/>
    </location>
</feature>
<feature type="compositionally biased region" description="Gly residues" evidence="2">
    <location>
        <begin position="95"/>
        <end position="110"/>
    </location>
</feature>
<feature type="modified residue" description="Phosphoserine" evidence="1">
    <location>
        <position position="67"/>
    </location>
</feature>
<feature type="sequence conflict" description="In Ref. 4; AAM64577." evidence="4" ref="4">
    <original>A</original>
    <variation>P</variation>
    <location>
        <position position="50"/>
    </location>
</feature>
<feature type="sequence conflict" description="In Ref. 4; AAM64577." evidence="4" ref="4">
    <original>D</original>
    <variation>A</variation>
    <location>
        <position position="102"/>
    </location>
</feature>
<accession>Q9LE54</accession>
<accession>Q8LBS7</accession>
<protein>
    <recommendedName>
        <fullName>Protein SPIRAL1-like 2</fullName>
    </recommendedName>
</protein>
<proteinExistence type="evidence at transcript level"/>
<organism>
    <name type="scientific">Arabidopsis thaliana</name>
    <name type="common">Mouse-ear cress</name>
    <dbReference type="NCBI Taxonomy" id="3702"/>
    <lineage>
        <taxon>Eukaryota</taxon>
        <taxon>Viridiplantae</taxon>
        <taxon>Streptophyta</taxon>
        <taxon>Embryophyta</taxon>
        <taxon>Tracheophyta</taxon>
        <taxon>Spermatophyta</taxon>
        <taxon>Magnoliopsida</taxon>
        <taxon>eudicotyledons</taxon>
        <taxon>Gunneridae</taxon>
        <taxon>Pentapetalae</taxon>
        <taxon>rosids</taxon>
        <taxon>malvids</taxon>
        <taxon>Brassicales</taxon>
        <taxon>Brassicaceae</taxon>
        <taxon>Camelineae</taxon>
        <taxon>Arabidopsis</taxon>
    </lineage>
</organism>
<sequence>MGRGVSAGGGQSSLGYLFGSGEAPKLAAVNKTPAETESSAHAPPTQAAAANAVDSIKQVPAGLNSNSANNYMRAEGQNTGNFITDRPSTKVHSAPGGGSSLDYLFGGGSN</sequence>
<comment type="function">
    <text evidence="3">Acts redundantly with SPR1 in maintaining the cortical microtubules organization essential for anisotropic cell growth.</text>
</comment>
<comment type="tissue specificity">
    <text evidence="3">Ubiquitous.</text>
</comment>
<comment type="similarity">
    <text evidence="4">Belongs to the SPIRAL1 family.</text>
</comment>
<keyword id="KW-0493">Microtubule</keyword>
<keyword id="KW-0597">Phosphoprotein</keyword>
<keyword id="KW-1185">Reference proteome</keyword>